<accession>Q2L2F4</accession>
<reference key="1">
    <citation type="journal article" date="2006" name="J. Bacteriol.">
        <title>Comparison of the genome sequence of the poultry pathogen Bordetella avium with those of B. bronchiseptica, B. pertussis, and B. parapertussis reveals extensive diversity in surface structures associated with host interaction.</title>
        <authorList>
            <person name="Sebaihia M."/>
            <person name="Preston A."/>
            <person name="Maskell D.J."/>
            <person name="Kuzmiak H."/>
            <person name="Connell T.D."/>
            <person name="King N.D."/>
            <person name="Orndorff P.E."/>
            <person name="Miyamoto D.M."/>
            <person name="Thomson N.R."/>
            <person name="Harris D."/>
            <person name="Goble A."/>
            <person name="Lord A."/>
            <person name="Murphy L."/>
            <person name="Quail M.A."/>
            <person name="Rutter S."/>
            <person name="Squares R."/>
            <person name="Squares S."/>
            <person name="Woodward J."/>
            <person name="Parkhill J."/>
            <person name="Temple L.M."/>
        </authorList>
    </citation>
    <scope>NUCLEOTIDE SEQUENCE [LARGE SCALE GENOMIC DNA]</scope>
    <source>
        <strain>197N</strain>
    </source>
</reference>
<proteinExistence type="inferred from homology"/>
<protein>
    <recommendedName>
        <fullName evidence="1">Large ribosomal subunit protein uL23</fullName>
    </recommendedName>
    <alternativeName>
        <fullName evidence="2">50S ribosomal protein L23</fullName>
    </alternativeName>
</protein>
<gene>
    <name evidence="1" type="primary">rplW</name>
    <name type="ordered locus">BAV0027</name>
</gene>
<name>RL23_BORA1</name>
<keyword id="KW-1185">Reference proteome</keyword>
<keyword id="KW-0687">Ribonucleoprotein</keyword>
<keyword id="KW-0689">Ribosomal protein</keyword>
<keyword id="KW-0694">RNA-binding</keyword>
<keyword id="KW-0699">rRNA-binding</keyword>
<sequence length="98" mass="11196">MNAERLMQVLLAPVVTEKATFVAEKHQQIAFRVVADATKPEIKAAVELLFKVQVEAVQVLNRKGKVKRFGRFVGRRRNERKAYVSLKEGQEIDFAEVK</sequence>
<feature type="chain" id="PRO_0000272710" description="Large ribosomal subunit protein uL23">
    <location>
        <begin position="1"/>
        <end position="98"/>
    </location>
</feature>
<evidence type="ECO:0000255" key="1">
    <source>
        <dbReference type="HAMAP-Rule" id="MF_01369"/>
    </source>
</evidence>
<evidence type="ECO:0000305" key="2"/>
<organism>
    <name type="scientific">Bordetella avium (strain 197N)</name>
    <dbReference type="NCBI Taxonomy" id="360910"/>
    <lineage>
        <taxon>Bacteria</taxon>
        <taxon>Pseudomonadati</taxon>
        <taxon>Pseudomonadota</taxon>
        <taxon>Betaproteobacteria</taxon>
        <taxon>Burkholderiales</taxon>
        <taxon>Alcaligenaceae</taxon>
        <taxon>Bordetella</taxon>
    </lineage>
</organism>
<dbReference type="EMBL" id="AM167904">
    <property type="protein sequence ID" value="CAJ47611.1"/>
    <property type="molecule type" value="Genomic_DNA"/>
</dbReference>
<dbReference type="RefSeq" id="WP_012415735.1">
    <property type="nucleotide sequence ID" value="NC_010645.1"/>
</dbReference>
<dbReference type="SMR" id="Q2L2F4"/>
<dbReference type="STRING" id="360910.BAV0027"/>
<dbReference type="GeneID" id="92936728"/>
<dbReference type="KEGG" id="bav:BAV0027"/>
<dbReference type="eggNOG" id="COG0089">
    <property type="taxonomic scope" value="Bacteria"/>
</dbReference>
<dbReference type="HOGENOM" id="CLU_037562_3_1_4"/>
<dbReference type="OrthoDB" id="9793353at2"/>
<dbReference type="Proteomes" id="UP000001977">
    <property type="component" value="Chromosome"/>
</dbReference>
<dbReference type="GO" id="GO:1990904">
    <property type="term" value="C:ribonucleoprotein complex"/>
    <property type="evidence" value="ECO:0007669"/>
    <property type="project" value="UniProtKB-KW"/>
</dbReference>
<dbReference type="GO" id="GO:0005840">
    <property type="term" value="C:ribosome"/>
    <property type="evidence" value="ECO:0007669"/>
    <property type="project" value="UniProtKB-KW"/>
</dbReference>
<dbReference type="GO" id="GO:0019843">
    <property type="term" value="F:rRNA binding"/>
    <property type="evidence" value="ECO:0007669"/>
    <property type="project" value="UniProtKB-UniRule"/>
</dbReference>
<dbReference type="GO" id="GO:0003735">
    <property type="term" value="F:structural constituent of ribosome"/>
    <property type="evidence" value="ECO:0007669"/>
    <property type="project" value="InterPro"/>
</dbReference>
<dbReference type="GO" id="GO:0006412">
    <property type="term" value="P:translation"/>
    <property type="evidence" value="ECO:0007669"/>
    <property type="project" value="UniProtKB-UniRule"/>
</dbReference>
<dbReference type="FunFam" id="3.30.70.330:FF:000001">
    <property type="entry name" value="50S ribosomal protein L23"/>
    <property type="match status" value="1"/>
</dbReference>
<dbReference type="Gene3D" id="3.30.70.330">
    <property type="match status" value="1"/>
</dbReference>
<dbReference type="HAMAP" id="MF_01369_B">
    <property type="entry name" value="Ribosomal_uL23_B"/>
    <property type="match status" value="1"/>
</dbReference>
<dbReference type="InterPro" id="IPR012677">
    <property type="entry name" value="Nucleotide-bd_a/b_plait_sf"/>
</dbReference>
<dbReference type="InterPro" id="IPR013025">
    <property type="entry name" value="Ribosomal_uL23-like"/>
</dbReference>
<dbReference type="InterPro" id="IPR012678">
    <property type="entry name" value="Ribosomal_uL23/eL15/eS24_sf"/>
</dbReference>
<dbReference type="NCBIfam" id="NF004359">
    <property type="entry name" value="PRK05738.1-3"/>
    <property type="match status" value="1"/>
</dbReference>
<dbReference type="NCBIfam" id="NF004363">
    <property type="entry name" value="PRK05738.2-4"/>
    <property type="match status" value="1"/>
</dbReference>
<dbReference type="PANTHER" id="PTHR11620">
    <property type="entry name" value="60S RIBOSOMAL PROTEIN L23A"/>
    <property type="match status" value="1"/>
</dbReference>
<dbReference type="Pfam" id="PF00276">
    <property type="entry name" value="Ribosomal_L23"/>
    <property type="match status" value="1"/>
</dbReference>
<dbReference type="SUPFAM" id="SSF54189">
    <property type="entry name" value="Ribosomal proteins S24e, L23 and L15e"/>
    <property type="match status" value="1"/>
</dbReference>
<comment type="function">
    <text evidence="1">One of the early assembly proteins it binds 23S rRNA. One of the proteins that surrounds the polypeptide exit tunnel on the outside of the ribosome. Forms the main docking site for trigger factor binding to the ribosome.</text>
</comment>
<comment type="subunit">
    <text evidence="1">Part of the 50S ribosomal subunit. Contacts protein L29, and trigger factor when it is bound to the ribosome.</text>
</comment>
<comment type="similarity">
    <text evidence="1">Belongs to the universal ribosomal protein uL23 family.</text>
</comment>